<comment type="catalytic activity">
    <reaction evidence="1">
        <text>D-erythro-1-(imidazol-4-yl)glycerol 3-phosphate = 3-(imidazol-4-yl)-2-oxopropyl phosphate + H2O</text>
        <dbReference type="Rhea" id="RHEA:11040"/>
        <dbReference type="ChEBI" id="CHEBI:15377"/>
        <dbReference type="ChEBI" id="CHEBI:57766"/>
        <dbReference type="ChEBI" id="CHEBI:58278"/>
        <dbReference type="EC" id="4.2.1.19"/>
    </reaction>
</comment>
<comment type="pathway">
    <text evidence="1">Amino-acid biosynthesis; L-histidine biosynthesis; L-histidine from 5-phospho-alpha-D-ribose 1-diphosphate: step 6/9.</text>
</comment>
<comment type="subcellular location">
    <subcellularLocation>
        <location evidence="1">Cytoplasm</location>
    </subcellularLocation>
</comment>
<comment type="similarity">
    <text evidence="1">Belongs to the imidazoleglycerol-phosphate dehydratase family.</text>
</comment>
<reference key="1">
    <citation type="journal article" date="2007" name="PLoS Genet.">
        <title>Patterns and implications of gene gain and loss in the evolution of Prochlorococcus.</title>
        <authorList>
            <person name="Kettler G.C."/>
            <person name="Martiny A.C."/>
            <person name="Huang K."/>
            <person name="Zucker J."/>
            <person name="Coleman M.L."/>
            <person name="Rodrigue S."/>
            <person name="Chen F."/>
            <person name="Lapidus A."/>
            <person name="Ferriera S."/>
            <person name="Johnson J."/>
            <person name="Steglich C."/>
            <person name="Church G.M."/>
            <person name="Richardson P."/>
            <person name="Chisholm S.W."/>
        </authorList>
    </citation>
    <scope>NUCLEOTIDE SEQUENCE [LARGE SCALE GENOMIC DNA]</scope>
    <source>
        <strain>MIT 9211</strain>
    </source>
</reference>
<feature type="chain" id="PRO_1000092709" description="Imidazoleglycerol-phosphate dehydratase">
    <location>
        <begin position="1"/>
        <end position="208"/>
    </location>
</feature>
<keyword id="KW-0028">Amino-acid biosynthesis</keyword>
<keyword id="KW-0963">Cytoplasm</keyword>
<keyword id="KW-0368">Histidine biosynthesis</keyword>
<keyword id="KW-0456">Lyase</keyword>
<keyword id="KW-1185">Reference proteome</keyword>
<proteinExistence type="inferred from homology"/>
<sequence>MSLQRTGEVHRVTKETNVTVRLGLDGKGKCKISTGVAFLDHMLQQLSSHGLFDLEVIAKGDTHIDDHHTNEDVGIAIGQALSESLGERQGINRFGHFSAPLDEALVQVVLDCSGRPHLSYGLNIPSQRIGSYETELVKEFFIAVVNNSGLTLHIRQLDGTNSHHIVEACFKAFARALRLATELDPRRGDAIPSSKGVLEQAGSKPKQI</sequence>
<gene>
    <name evidence="1" type="primary">hisB</name>
    <name type="ordered locus">P9211_03081</name>
</gene>
<evidence type="ECO:0000255" key="1">
    <source>
        <dbReference type="HAMAP-Rule" id="MF_00076"/>
    </source>
</evidence>
<protein>
    <recommendedName>
        <fullName evidence="1">Imidazoleglycerol-phosphate dehydratase</fullName>
        <shortName evidence="1">IGPD</shortName>
        <ecNumber evidence="1">4.2.1.19</ecNumber>
    </recommendedName>
</protein>
<name>HIS7_PROM4</name>
<accession>A9BDS9</accession>
<dbReference type="EC" id="4.2.1.19" evidence="1"/>
<dbReference type="EMBL" id="CP000878">
    <property type="protein sequence ID" value="ABX08239.1"/>
    <property type="molecule type" value="Genomic_DNA"/>
</dbReference>
<dbReference type="RefSeq" id="WP_012194864.1">
    <property type="nucleotide sequence ID" value="NC_009976.1"/>
</dbReference>
<dbReference type="SMR" id="A9BDS9"/>
<dbReference type="STRING" id="93059.P9211_03081"/>
<dbReference type="KEGG" id="pmj:P9211_03081"/>
<dbReference type="eggNOG" id="COG0131">
    <property type="taxonomic scope" value="Bacteria"/>
</dbReference>
<dbReference type="HOGENOM" id="CLU_044308_3_0_3"/>
<dbReference type="OrthoDB" id="9790411at2"/>
<dbReference type="UniPathway" id="UPA00031">
    <property type="reaction ID" value="UER00011"/>
</dbReference>
<dbReference type="Proteomes" id="UP000000788">
    <property type="component" value="Chromosome"/>
</dbReference>
<dbReference type="GO" id="GO:0005737">
    <property type="term" value="C:cytoplasm"/>
    <property type="evidence" value="ECO:0007669"/>
    <property type="project" value="UniProtKB-SubCell"/>
</dbReference>
<dbReference type="GO" id="GO:0004424">
    <property type="term" value="F:imidazoleglycerol-phosphate dehydratase activity"/>
    <property type="evidence" value="ECO:0007669"/>
    <property type="project" value="UniProtKB-UniRule"/>
</dbReference>
<dbReference type="GO" id="GO:0000105">
    <property type="term" value="P:L-histidine biosynthetic process"/>
    <property type="evidence" value="ECO:0007669"/>
    <property type="project" value="UniProtKB-UniRule"/>
</dbReference>
<dbReference type="CDD" id="cd07914">
    <property type="entry name" value="IGPD"/>
    <property type="match status" value="1"/>
</dbReference>
<dbReference type="FunFam" id="3.30.230.40:FF:000002">
    <property type="entry name" value="Imidazoleglycerol-phosphate dehydratase"/>
    <property type="match status" value="1"/>
</dbReference>
<dbReference type="FunFam" id="3.30.230.40:FF:000003">
    <property type="entry name" value="Imidazoleglycerol-phosphate dehydratase HisB"/>
    <property type="match status" value="1"/>
</dbReference>
<dbReference type="Gene3D" id="3.30.230.40">
    <property type="entry name" value="Imidazole glycerol phosphate dehydratase, domain 1"/>
    <property type="match status" value="2"/>
</dbReference>
<dbReference type="HAMAP" id="MF_00076">
    <property type="entry name" value="HisB"/>
    <property type="match status" value="1"/>
</dbReference>
<dbReference type="InterPro" id="IPR038494">
    <property type="entry name" value="IGPD_sf"/>
</dbReference>
<dbReference type="InterPro" id="IPR000807">
    <property type="entry name" value="ImidazoleglycerolP_deHydtase"/>
</dbReference>
<dbReference type="InterPro" id="IPR020565">
    <property type="entry name" value="ImidazoleglycerP_deHydtase_CS"/>
</dbReference>
<dbReference type="InterPro" id="IPR020568">
    <property type="entry name" value="Ribosomal_Su5_D2-typ_SF"/>
</dbReference>
<dbReference type="NCBIfam" id="NF002108">
    <property type="entry name" value="PRK00951.1-3"/>
    <property type="match status" value="1"/>
</dbReference>
<dbReference type="NCBIfam" id="NF002109">
    <property type="entry name" value="PRK00951.1-5"/>
    <property type="match status" value="1"/>
</dbReference>
<dbReference type="NCBIfam" id="NF002111">
    <property type="entry name" value="PRK00951.2-1"/>
    <property type="match status" value="1"/>
</dbReference>
<dbReference type="NCBIfam" id="NF002114">
    <property type="entry name" value="PRK00951.2-4"/>
    <property type="match status" value="1"/>
</dbReference>
<dbReference type="PANTHER" id="PTHR23133:SF2">
    <property type="entry name" value="IMIDAZOLEGLYCEROL-PHOSPHATE DEHYDRATASE"/>
    <property type="match status" value="1"/>
</dbReference>
<dbReference type="PANTHER" id="PTHR23133">
    <property type="entry name" value="IMIDAZOLEGLYCEROL-PHOSPHATE DEHYDRATASE HIS7"/>
    <property type="match status" value="1"/>
</dbReference>
<dbReference type="Pfam" id="PF00475">
    <property type="entry name" value="IGPD"/>
    <property type="match status" value="1"/>
</dbReference>
<dbReference type="SUPFAM" id="SSF54211">
    <property type="entry name" value="Ribosomal protein S5 domain 2-like"/>
    <property type="match status" value="2"/>
</dbReference>
<dbReference type="PROSITE" id="PS00954">
    <property type="entry name" value="IGP_DEHYDRATASE_1"/>
    <property type="match status" value="1"/>
</dbReference>
<dbReference type="PROSITE" id="PS00955">
    <property type="entry name" value="IGP_DEHYDRATASE_2"/>
    <property type="match status" value="1"/>
</dbReference>
<organism>
    <name type="scientific">Prochlorococcus marinus (strain MIT 9211)</name>
    <dbReference type="NCBI Taxonomy" id="93059"/>
    <lineage>
        <taxon>Bacteria</taxon>
        <taxon>Bacillati</taxon>
        <taxon>Cyanobacteriota</taxon>
        <taxon>Cyanophyceae</taxon>
        <taxon>Synechococcales</taxon>
        <taxon>Prochlorococcaceae</taxon>
        <taxon>Prochlorococcus</taxon>
    </lineage>
</organism>